<comment type="function">
    <text evidence="1">One of the essential components for the initiation of protein synthesis. Stabilizes the binding of IF-2 and IF-3 on the 30S subunit to which N-formylmethionyl-tRNA(fMet) subsequently binds. Helps modulate mRNA selection, yielding the 30S pre-initiation complex (PIC). Upon addition of the 50S ribosomal subunit IF-1, IF-2 and IF-3 are released leaving the mature 70S translation initiation complex.</text>
</comment>
<comment type="subunit">
    <text evidence="1">Component of the 30S ribosomal translation pre-initiation complex which assembles on the 30S ribosome in the order IF-2 and IF-3, IF-1 and N-formylmethionyl-tRNA(fMet); mRNA recruitment can occur at any time during PIC assembly.</text>
</comment>
<comment type="subcellular location">
    <subcellularLocation>
        <location evidence="1">Cytoplasm</location>
    </subcellularLocation>
</comment>
<comment type="similarity">
    <text evidence="1">Belongs to the IF-1 family.</text>
</comment>
<sequence>MAKEDVIEIEGKVVETMPNAMFTVELENGHQILATVSGKIRKNYIRILVGDRVTVEMSPYDLTRGRITYRFK</sequence>
<name>IF1_STRA5</name>
<feature type="chain" id="PRO_0000095874" description="Translation initiation factor IF-1">
    <location>
        <begin position="1"/>
        <end position="72"/>
    </location>
</feature>
<feature type="domain" description="S1-like" evidence="1">
    <location>
        <begin position="1"/>
        <end position="72"/>
    </location>
</feature>
<keyword id="KW-0963">Cytoplasm</keyword>
<keyword id="KW-0396">Initiation factor</keyword>
<keyword id="KW-0648">Protein biosynthesis</keyword>
<keyword id="KW-1185">Reference proteome</keyword>
<keyword id="KW-0694">RNA-binding</keyword>
<keyword id="KW-0699">rRNA-binding</keyword>
<accession>P65127</accession>
<accession>Q9A1V3</accession>
<proteinExistence type="inferred from homology"/>
<reference key="1">
    <citation type="journal article" date="2002" name="Proc. Natl. Acad. Sci. U.S.A.">
        <title>Complete genome sequence and comparative genomic analysis of an emerging human pathogen, serotype V Streptococcus agalactiae.</title>
        <authorList>
            <person name="Tettelin H."/>
            <person name="Masignani V."/>
            <person name="Cieslewicz M.J."/>
            <person name="Eisen J.A."/>
            <person name="Peterson S.N."/>
            <person name="Wessels M.R."/>
            <person name="Paulsen I.T."/>
            <person name="Nelson K.E."/>
            <person name="Margarit I."/>
            <person name="Read T.D."/>
            <person name="Madoff L.C."/>
            <person name="Wolf A.M."/>
            <person name="Beanan M.J."/>
            <person name="Brinkac L.M."/>
            <person name="Daugherty S.C."/>
            <person name="DeBoy R.T."/>
            <person name="Durkin A.S."/>
            <person name="Kolonay J.F."/>
            <person name="Madupu R."/>
            <person name="Lewis M.R."/>
            <person name="Radune D."/>
            <person name="Fedorova N.B."/>
            <person name="Scanlan D."/>
            <person name="Khouri H.M."/>
            <person name="Mulligan S."/>
            <person name="Carty H.A."/>
            <person name="Cline R.T."/>
            <person name="Van Aken S.E."/>
            <person name="Gill J."/>
            <person name="Scarselli M."/>
            <person name="Mora M."/>
            <person name="Iacobini E.T."/>
            <person name="Brettoni C."/>
            <person name="Galli G."/>
            <person name="Mariani M."/>
            <person name="Vegni F."/>
            <person name="Maione D."/>
            <person name="Rinaudo D."/>
            <person name="Rappuoli R."/>
            <person name="Telford J.L."/>
            <person name="Kasper D.L."/>
            <person name="Grandi G."/>
            <person name="Fraser C.M."/>
        </authorList>
    </citation>
    <scope>NUCLEOTIDE SEQUENCE [LARGE SCALE GENOMIC DNA]</scope>
    <source>
        <strain>ATCC BAA-611 / 2603 V/R</strain>
    </source>
</reference>
<organism>
    <name type="scientific">Streptococcus agalactiae serotype V (strain ATCC BAA-611 / 2603 V/R)</name>
    <dbReference type="NCBI Taxonomy" id="208435"/>
    <lineage>
        <taxon>Bacteria</taxon>
        <taxon>Bacillati</taxon>
        <taxon>Bacillota</taxon>
        <taxon>Bacilli</taxon>
        <taxon>Lactobacillales</taxon>
        <taxon>Streptococcaceae</taxon>
        <taxon>Streptococcus</taxon>
    </lineage>
</organism>
<evidence type="ECO:0000255" key="1">
    <source>
        <dbReference type="HAMAP-Rule" id="MF_00075"/>
    </source>
</evidence>
<protein>
    <recommendedName>
        <fullName evidence="1">Translation initiation factor IF-1</fullName>
    </recommendedName>
</protein>
<dbReference type="EMBL" id="AE009948">
    <property type="protein sequence ID" value="AAM98988.1"/>
    <property type="molecule type" value="Genomic_DNA"/>
</dbReference>
<dbReference type="RefSeq" id="NP_687116.1">
    <property type="nucleotide sequence ID" value="NC_004116.1"/>
</dbReference>
<dbReference type="RefSeq" id="WP_001040189.1">
    <property type="nucleotide sequence ID" value="NC_004116.1"/>
</dbReference>
<dbReference type="SMR" id="P65127"/>
<dbReference type="STRING" id="208435.SAG0080"/>
<dbReference type="GeneID" id="98392414"/>
<dbReference type="KEGG" id="sag:SAG0080"/>
<dbReference type="PATRIC" id="fig|208435.3.peg.79"/>
<dbReference type="HOGENOM" id="CLU_151267_1_0_9"/>
<dbReference type="OrthoDB" id="9803250at2"/>
<dbReference type="PRO" id="PR:P65127"/>
<dbReference type="Proteomes" id="UP000000821">
    <property type="component" value="Chromosome"/>
</dbReference>
<dbReference type="GO" id="GO:0005829">
    <property type="term" value="C:cytosol"/>
    <property type="evidence" value="ECO:0007669"/>
    <property type="project" value="TreeGrafter"/>
</dbReference>
<dbReference type="GO" id="GO:0043022">
    <property type="term" value="F:ribosome binding"/>
    <property type="evidence" value="ECO:0007669"/>
    <property type="project" value="UniProtKB-UniRule"/>
</dbReference>
<dbReference type="GO" id="GO:0019843">
    <property type="term" value="F:rRNA binding"/>
    <property type="evidence" value="ECO:0007669"/>
    <property type="project" value="UniProtKB-UniRule"/>
</dbReference>
<dbReference type="GO" id="GO:0003743">
    <property type="term" value="F:translation initiation factor activity"/>
    <property type="evidence" value="ECO:0007669"/>
    <property type="project" value="UniProtKB-UniRule"/>
</dbReference>
<dbReference type="CDD" id="cd04451">
    <property type="entry name" value="S1_IF1"/>
    <property type="match status" value="1"/>
</dbReference>
<dbReference type="FunFam" id="2.40.50.140:FF:000002">
    <property type="entry name" value="Translation initiation factor IF-1"/>
    <property type="match status" value="1"/>
</dbReference>
<dbReference type="Gene3D" id="2.40.50.140">
    <property type="entry name" value="Nucleic acid-binding proteins"/>
    <property type="match status" value="1"/>
</dbReference>
<dbReference type="HAMAP" id="MF_00075">
    <property type="entry name" value="IF_1"/>
    <property type="match status" value="1"/>
</dbReference>
<dbReference type="InterPro" id="IPR012340">
    <property type="entry name" value="NA-bd_OB-fold"/>
</dbReference>
<dbReference type="InterPro" id="IPR006196">
    <property type="entry name" value="RNA-binding_domain_S1_IF1"/>
</dbReference>
<dbReference type="InterPro" id="IPR003029">
    <property type="entry name" value="S1_domain"/>
</dbReference>
<dbReference type="InterPro" id="IPR004368">
    <property type="entry name" value="TIF_IF1"/>
</dbReference>
<dbReference type="NCBIfam" id="TIGR00008">
    <property type="entry name" value="infA"/>
    <property type="match status" value="1"/>
</dbReference>
<dbReference type="PANTHER" id="PTHR33370">
    <property type="entry name" value="TRANSLATION INITIATION FACTOR IF-1, CHLOROPLASTIC"/>
    <property type="match status" value="1"/>
</dbReference>
<dbReference type="PANTHER" id="PTHR33370:SF1">
    <property type="entry name" value="TRANSLATION INITIATION FACTOR IF-1, CHLOROPLASTIC"/>
    <property type="match status" value="1"/>
</dbReference>
<dbReference type="Pfam" id="PF01176">
    <property type="entry name" value="eIF-1a"/>
    <property type="match status" value="1"/>
</dbReference>
<dbReference type="SMART" id="SM00316">
    <property type="entry name" value="S1"/>
    <property type="match status" value="1"/>
</dbReference>
<dbReference type="SUPFAM" id="SSF50249">
    <property type="entry name" value="Nucleic acid-binding proteins"/>
    <property type="match status" value="1"/>
</dbReference>
<dbReference type="PROSITE" id="PS50832">
    <property type="entry name" value="S1_IF1_TYPE"/>
    <property type="match status" value="1"/>
</dbReference>
<gene>
    <name evidence="1" type="primary">infA</name>
    <name type="ordered locus">SAG0080</name>
</gene>